<reference key="1">
    <citation type="journal article" date="2005" name="DNA Res.">
        <title>Complete genome sequence of the facultative anaerobic magnetotactic bacterium Magnetospirillum sp. strain AMB-1.</title>
        <authorList>
            <person name="Matsunaga T."/>
            <person name="Okamura Y."/>
            <person name="Fukuda Y."/>
            <person name="Wahyudi A.T."/>
            <person name="Murase Y."/>
            <person name="Takeyama H."/>
        </authorList>
    </citation>
    <scope>NUCLEOTIDE SEQUENCE [LARGE SCALE GENOMIC DNA]</scope>
    <source>
        <strain>ATCC 700264 / AMB-1</strain>
    </source>
</reference>
<accession>Q2VYP7</accession>
<organism>
    <name type="scientific">Paramagnetospirillum magneticum (strain ATCC 700264 / AMB-1)</name>
    <name type="common">Magnetospirillum magneticum</name>
    <dbReference type="NCBI Taxonomy" id="342108"/>
    <lineage>
        <taxon>Bacteria</taxon>
        <taxon>Pseudomonadati</taxon>
        <taxon>Pseudomonadota</taxon>
        <taxon>Alphaproteobacteria</taxon>
        <taxon>Rhodospirillales</taxon>
        <taxon>Magnetospirillaceae</taxon>
        <taxon>Paramagnetospirillum</taxon>
    </lineage>
</organism>
<keyword id="KW-0067">ATP-binding</keyword>
<keyword id="KW-0997">Cell inner membrane</keyword>
<keyword id="KW-1003">Cell membrane</keyword>
<keyword id="KW-0472">Membrane</keyword>
<keyword id="KW-0547">Nucleotide-binding</keyword>
<keyword id="KW-0592">Phosphate transport</keyword>
<keyword id="KW-1278">Translocase</keyword>
<keyword id="KW-0813">Transport</keyword>
<evidence type="ECO:0000255" key="1">
    <source>
        <dbReference type="HAMAP-Rule" id="MF_01702"/>
    </source>
</evidence>
<proteinExistence type="inferred from homology"/>
<name>PSTB3_PARM1</name>
<sequence length="258" mass="27651">MTEQPAQPKMTARSLAVHYGGKPALKGVDLDIVAGEVNALIGPSGCGKSTFLRCLNRMNDTIPAAKVSGQATLDGEDIYGPAGMDPVLLRARVGMVFQRPNPFPKSIYDNVAFGPRLHGLVAEGDEMDVLVRTSLERAGLWKEVKDVLGNLGTSLSGGQQQRLCIARAIAVSPEVILMDEPCSALDPIATARIEELIDELRDVFTIVMVTHSMQQAARVSQTTAFFHLGEIVEVGATEQIFTAPANSLTQGYITGRFG</sequence>
<protein>
    <recommendedName>
        <fullName evidence="1">Phosphate import ATP-binding protein PstB 3</fullName>
        <ecNumber evidence="1">7.3.2.1</ecNumber>
    </recommendedName>
    <alternativeName>
        <fullName evidence="1">ABC phosphate transporter 3</fullName>
    </alternativeName>
    <alternativeName>
        <fullName evidence="1">Phosphate-transporting ATPase 3</fullName>
    </alternativeName>
</protein>
<feature type="chain" id="PRO_0000272474" description="Phosphate import ATP-binding protein PstB 3">
    <location>
        <begin position="1"/>
        <end position="258"/>
    </location>
</feature>
<feature type="domain" description="ABC transporter" evidence="1">
    <location>
        <begin position="10"/>
        <end position="253"/>
    </location>
</feature>
<feature type="binding site" evidence="1">
    <location>
        <begin position="42"/>
        <end position="49"/>
    </location>
    <ligand>
        <name>ATP</name>
        <dbReference type="ChEBI" id="CHEBI:30616"/>
    </ligand>
</feature>
<gene>
    <name evidence="1" type="primary">pstB3</name>
    <name type="ordered locus">amb4474</name>
</gene>
<comment type="function">
    <text evidence="1">Part of the ABC transporter complex PstSACB involved in phosphate import. Responsible for energy coupling to the transport system.</text>
</comment>
<comment type="catalytic activity">
    <reaction evidence="1">
        <text>phosphate(out) + ATP + H2O = ADP + 2 phosphate(in) + H(+)</text>
        <dbReference type="Rhea" id="RHEA:24440"/>
        <dbReference type="ChEBI" id="CHEBI:15377"/>
        <dbReference type="ChEBI" id="CHEBI:15378"/>
        <dbReference type="ChEBI" id="CHEBI:30616"/>
        <dbReference type="ChEBI" id="CHEBI:43474"/>
        <dbReference type="ChEBI" id="CHEBI:456216"/>
        <dbReference type="EC" id="7.3.2.1"/>
    </reaction>
</comment>
<comment type="subunit">
    <text evidence="1">The complex is composed of two ATP-binding proteins (PstB), two transmembrane proteins (PstC and PstA) and a solute-binding protein (PstS).</text>
</comment>
<comment type="subcellular location">
    <subcellularLocation>
        <location evidence="1">Cell inner membrane</location>
        <topology evidence="1">Peripheral membrane protein</topology>
    </subcellularLocation>
</comment>
<comment type="similarity">
    <text evidence="1">Belongs to the ABC transporter superfamily. Phosphate importer (TC 3.A.1.7) family.</text>
</comment>
<dbReference type="EC" id="7.3.2.1" evidence="1"/>
<dbReference type="EMBL" id="AP007255">
    <property type="protein sequence ID" value="BAE53278.1"/>
    <property type="molecule type" value="Genomic_DNA"/>
</dbReference>
<dbReference type="RefSeq" id="WP_011386818.1">
    <property type="nucleotide sequence ID" value="NC_007626.1"/>
</dbReference>
<dbReference type="SMR" id="Q2VYP7"/>
<dbReference type="STRING" id="342108.amb4474"/>
<dbReference type="KEGG" id="mag:amb4474"/>
<dbReference type="HOGENOM" id="CLU_000604_1_22_5"/>
<dbReference type="OrthoDB" id="9802264at2"/>
<dbReference type="Proteomes" id="UP000007058">
    <property type="component" value="Chromosome"/>
</dbReference>
<dbReference type="GO" id="GO:0005886">
    <property type="term" value="C:plasma membrane"/>
    <property type="evidence" value="ECO:0007669"/>
    <property type="project" value="UniProtKB-SubCell"/>
</dbReference>
<dbReference type="GO" id="GO:0005524">
    <property type="term" value="F:ATP binding"/>
    <property type="evidence" value="ECO:0007669"/>
    <property type="project" value="UniProtKB-KW"/>
</dbReference>
<dbReference type="GO" id="GO:0016887">
    <property type="term" value="F:ATP hydrolysis activity"/>
    <property type="evidence" value="ECO:0007669"/>
    <property type="project" value="InterPro"/>
</dbReference>
<dbReference type="GO" id="GO:0015415">
    <property type="term" value="F:ATPase-coupled phosphate ion transmembrane transporter activity"/>
    <property type="evidence" value="ECO:0007669"/>
    <property type="project" value="UniProtKB-EC"/>
</dbReference>
<dbReference type="GO" id="GO:0035435">
    <property type="term" value="P:phosphate ion transmembrane transport"/>
    <property type="evidence" value="ECO:0007669"/>
    <property type="project" value="InterPro"/>
</dbReference>
<dbReference type="CDD" id="cd03260">
    <property type="entry name" value="ABC_PstB_phosphate_transporter"/>
    <property type="match status" value="1"/>
</dbReference>
<dbReference type="Gene3D" id="3.40.50.300">
    <property type="entry name" value="P-loop containing nucleotide triphosphate hydrolases"/>
    <property type="match status" value="1"/>
</dbReference>
<dbReference type="InterPro" id="IPR003593">
    <property type="entry name" value="AAA+_ATPase"/>
</dbReference>
<dbReference type="InterPro" id="IPR003439">
    <property type="entry name" value="ABC_transporter-like_ATP-bd"/>
</dbReference>
<dbReference type="InterPro" id="IPR017871">
    <property type="entry name" value="ABC_transporter-like_CS"/>
</dbReference>
<dbReference type="InterPro" id="IPR027417">
    <property type="entry name" value="P-loop_NTPase"/>
</dbReference>
<dbReference type="InterPro" id="IPR005670">
    <property type="entry name" value="PstB-like"/>
</dbReference>
<dbReference type="NCBIfam" id="TIGR00972">
    <property type="entry name" value="3a0107s01c2"/>
    <property type="match status" value="1"/>
</dbReference>
<dbReference type="PANTHER" id="PTHR43423">
    <property type="entry name" value="ABC TRANSPORTER I FAMILY MEMBER 17"/>
    <property type="match status" value="1"/>
</dbReference>
<dbReference type="PANTHER" id="PTHR43423:SF1">
    <property type="entry name" value="ABC TRANSPORTER I FAMILY MEMBER 17"/>
    <property type="match status" value="1"/>
</dbReference>
<dbReference type="Pfam" id="PF00005">
    <property type="entry name" value="ABC_tran"/>
    <property type="match status" value="1"/>
</dbReference>
<dbReference type="SMART" id="SM00382">
    <property type="entry name" value="AAA"/>
    <property type="match status" value="1"/>
</dbReference>
<dbReference type="SUPFAM" id="SSF52540">
    <property type="entry name" value="P-loop containing nucleoside triphosphate hydrolases"/>
    <property type="match status" value="1"/>
</dbReference>
<dbReference type="PROSITE" id="PS00211">
    <property type="entry name" value="ABC_TRANSPORTER_1"/>
    <property type="match status" value="1"/>
</dbReference>
<dbReference type="PROSITE" id="PS50893">
    <property type="entry name" value="ABC_TRANSPORTER_2"/>
    <property type="match status" value="1"/>
</dbReference>
<dbReference type="PROSITE" id="PS51238">
    <property type="entry name" value="PSTB"/>
    <property type="match status" value="1"/>
</dbReference>